<name>BGAL_HEYCO</name>
<keyword id="KW-0326">Glycosidase</keyword>
<keyword id="KW-0378">Hydrolase</keyword>
<keyword id="KW-0479">Metal-binding</keyword>
<keyword id="KW-0862">Zinc</keyword>
<dbReference type="EC" id="3.2.1.23"/>
<dbReference type="EMBL" id="GU323918">
    <property type="protein sequence ID" value="ADF47156.1"/>
    <property type="molecule type" value="Genomic_DNA"/>
</dbReference>
<dbReference type="RefSeq" id="WP_029142380.1">
    <property type="nucleotide sequence ID" value="NZ_JBHLHW010000001.1"/>
</dbReference>
<dbReference type="SMR" id="D5JGG0"/>
<dbReference type="STRING" id="1398.AB434_1803"/>
<dbReference type="CAZy" id="GH42">
    <property type="family name" value="Glycoside Hydrolase Family 42"/>
</dbReference>
<dbReference type="GO" id="GO:0009341">
    <property type="term" value="C:beta-galactosidase complex"/>
    <property type="evidence" value="ECO:0007669"/>
    <property type="project" value="InterPro"/>
</dbReference>
<dbReference type="GO" id="GO:0004565">
    <property type="term" value="F:beta-galactosidase activity"/>
    <property type="evidence" value="ECO:0007669"/>
    <property type="project" value="UniProtKB-EC"/>
</dbReference>
<dbReference type="GO" id="GO:0046872">
    <property type="term" value="F:metal ion binding"/>
    <property type="evidence" value="ECO:0007669"/>
    <property type="project" value="UniProtKB-KW"/>
</dbReference>
<dbReference type="GO" id="GO:0006012">
    <property type="term" value="P:galactose metabolic process"/>
    <property type="evidence" value="ECO:0007669"/>
    <property type="project" value="InterPro"/>
</dbReference>
<dbReference type="CDD" id="cd03143">
    <property type="entry name" value="A4_beta-galactosidase_middle_domain"/>
    <property type="match status" value="1"/>
</dbReference>
<dbReference type="Gene3D" id="3.40.50.880">
    <property type="match status" value="1"/>
</dbReference>
<dbReference type="Gene3D" id="3.20.20.80">
    <property type="entry name" value="Glycosidases"/>
    <property type="match status" value="1"/>
</dbReference>
<dbReference type="Gene3D" id="2.60.40.1180">
    <property type="entry name" value="Golgi alpha-mannosidase II"/>
    <property type="match status" value="1"/>
</dbReference>
<dbReference type="InterPro" id="IPR013739">
    <property type="entry name" value="Beta_galactosidase_C"/>
</dbReference>
<dbReference type="InterPro" id="IPR013738">
    <property type="entry name" value="Beta_galactosidase_Trimer"/>
</dbReference>
<dbReference type="InterPro" id="IPR029062">
    <property type="entry name" value="Class_I_gatase-like"/>
</dbReference>
<dbReference type="InterPro" id="IPR003476">
    <property type="entry name" value="Glyco_hydro_42"/>
</dbReference>
<dbReference type="InterPro" id="IPR013529">
    <property type="entry name" value="Glyco_hydro_42_N"/>
</dbReference>
<dbReference type="InterPro" id="IPR013780">
    <property type="entry name" value="Glyco_hydro_b"/>
</dbReference>
<dbReference type="InterPro" id="IPR017853">
    <property type="entry name" value="Glycoside_hydrolase_SF"/>
</dbReference>
<dbReference type="PANTHER" id="PTHR36447">
    <property type="entry name" value="BETA-GALACTOSIDASE GANA"/>
    <property type="match status" value="1"/>
</dbReference>
<dbReference type="PANTHER" id="PTHR36447:SF1">
    <property type="entry name" value="BETA-GALACTOSIDASE GANA"/>
    <property type="match status" value="1"/>
</dbReference>
<dbReference type="Pfam" id="PF02449">
    <property type="entry name" value="Glyco_hydro_42"/>
    <property type="match status" value="1"/>
</dbReference>
<dbReference type="Pfam" id="PF08533">
    <property type="entry name" value="Glyco_hydro_42C"/>
    <property type="match status" value="1"/>
</dbReference>
<dbReference type="Pfam" id="PF08532">
    <property type="entry name" value="Glyco_hydro_42M"/>
    <property type="match status" value="1"/>
</dbReference>
<dbReference type="PIRSF" id="PIRSF001084">
    <property type="entry name" value="B-galactosidase"/>
    <property type="match status" value="1"/>
</dbReference>
<dbReference type="SUPFAM" id="SSF51445">
    <property type="entry name" value="(Trans)glycosidases"/>
    <property type="match status" value="1"/>
</dbReference>
<dbReference type="SUPFAM" id="SSF52317">
    <property type="entry name" value="Class I glutamine amidotransferase-like"/>
    <property type="match status" value="1"/>
</dbReference>
<gene>
    <name evidence="4" type="primary">lacZ</name>
</gene>
<protein>
    <recommendedName>
        <fullName>Beta-galactosidase LacZ</fullName>
        <shortName evidence="2">Beta-gal</shortName>
        <ecNumber>3.2.1.23</ecNumber>
    </recommendedName>
</protein>
<evidence type="ECO:0000250" key="1">
    <source>
        <dbReference type="UniProtKB" id="O69315"/>
    </source>
</evidence>
<evidence type="ECO:0000250" key="2">
    <source>
        <dbReference type="UniProtKB" id="P19668"/>
    </source>
</evidence>
<evidence type="ECO:0000255" key="3"/>
<evidence type="ECO:0000312" key="4">
    <source>
        <dbReference type="EMBL" id="ADF47156.1"/>
    </source>
</evidence>
<comment type="catalytic activity">
    <reaction evidence="2">
        <text>Hydrolysis of terminal non-reducing beta-D-galactose residues in beta-D-galactosides.</text>
        <dbReference type="EC" id="3.2.1.23"/>
    </reaction>
</comment>
<comment type="similarity">
    <text evidence="3">Belongs to the glycosyl hydrolase 42 family.</text>
</comment>
<accession>D5JGG0</accession>
<reference evidence="4" key="1">
    <citation type="journal article" date="2010" name="Appl. Environ. Microbiol.">
        <title>Genetic tool development for a new host for biotechnology, the thermotolerant bacterium Bacillus coagulans.</title>
        <authorList>
            <person name="Kovacs A.T."/>
            <person name="van Hartskamp M."/>
            <person name="Kuipers O.P."/>
            <person name="van Kranenburg R."/>
        </authorList>
    </citation>
    <scope>NUCLEOTIDE SEQUENCE [GENOMIC DNA]</scope>
    <source>
        <strain evidence="4">ATCC 7050 / DSM 1 / JCM 2257 / CCUG 7417 / NBRC 12583 / NCIMB 9365 / NCTC 10334 / NRS 609</strain>
    </source>
</reference>
<feature type="chain" id="PRO_0000407682" description="Beta-galactosidase LacZ">
    <location>
        <begin position="1"/>
        <end position="665"/>
    </location>
</feature>
<feature type="active site" description="Proton donor" evidence="1">
    <location>
        <position position="149"/>
    </location>
</feature>
<feature type="active site" description="Nucleophile" evidence="1">
    <location>
        <position position="303"/>
    </location>
</feature>
<feature type="binding site" evidence="1">
    <location>
        <position position="110"/>
    </location>
    <ligand>
        <name>substrate</name>
    </ligand>
</feature>
<feature type="binding site" evidence="1">
    <location>
        <position position="114"/>
    </location>
    <ligand>
        <name>Zn(2+)</name>
        <dbReference type="ChEBI" id="CHEBI:29105"/>
    </ligand>
</feature>
<feature type="binding site" evidence="1">
    <location>
        <position position="148"/>
    </location>
    <ligand>
        <name>substrate</name>
    </ligand>
</feature>
<feature type="binding site" evidence="1">
    <location>
        <position position="157"/>
    </location>
    <ligand>
        <name>Zn(2+)</name>
        <dbReference type="ChEBI" id="CHEBI:29105"/>
    </ligand>
</feature>
<feature type="binding site" evidence="1">
    <location>
        <position position="159"/>
    </location>
    <ligand>
        <name>Zn(2+)</name>
        <dbReference type="ChEBI" id="CHEBI:29105"/>
    </ligand>
</feature>
<feature type="binding site" evidence="1">
    <location>
        <position position="162"/>
    </location>
    <ligand>
        <name>Zn(2+)</name>
        <dbReference type="ChEBI" id="CHEBI:29105"/>
    </ligand>
</feature>
<feature type="binding site" evidence="1">
    <location>
        <position position="311"/>
    </location>
    <ligand>
        <name>substrate</name>
    </ligand>
</feature>
<feature type="binding site" evidence="1">
    <location>
        <begin position="351"/>
        <end position="354"/>
    </location>
    <ligand>
        <name>substrate</name>
    </ligand>
</feature>
<proteinExistence type="inferred from homology"/>
<organism>
    <name type="scientific">Heyndrickxia coagulans</name>
    <name type="common">Weizmannia coagulans</name>
    <dbReference type="NCBI Taxonomy" id="1398"/>
    <lineage>
        <taxon>Bacteria</taxon>
        <taxon>Bacillati</taxon>
        <taxon>Bacillota</taxon>
        <taxon>Bacilli</taxon>
        <taxon>Bacillales</taxon>
        <taxon>Bacillaceae</taxon>
        <taxon>Heyndrickxia</taxon>
    </lineage>
</organism>
<sequence>MLKKHEKFYYGGDYNPEQWDESVWKEDMRLMKKAGVNYVSINIFSWARLQPDEETYDFSTLDKIMDMLAENGIGADLATATAAPPAWLSRKYPDSLPVDKDGSRFLPGSRQHYCPNSKDYARLAAKLVRKIAERYKSHPALVMWHVNNEYGCHISECYCDNCKKGFQTWLKEKYGTIENLNKSWSTDFWSQRYYEWEEICLPGKTPTFANPMQQLDYKAFMDDSLLALYKMERDILKTYTPDVPVMTNLMGLHKPVDGFHWAKEMDLVTWDAYPDPFEDIPYAQFMAHDLTRSLKKQPFLLMEQAAGAVNWRAQNAVKAPGVMRLWSYEAAAHGADGIMFFQWRASQGGAEKFHSGMVPHSGDEESRNFREVVQLGNELKNLEKVTGSAYASDVAIVFDWKNWWALELDSKPSSLVTYIKQLLPFYRVLHTQNIGVDFIHPDEAMDRYKVVFAPASYRVTKTFADKVKAYVENGGYFATNFFSGIADENERVYLGGYPGAYRDILGIYVEEFAPMKKGAVHQIRTGYGDAAIRVWEEKIHLKGAEALAWFKDGYLAGSPAVTAHHCGKGKAYYIGTQPDEQYLSSLLKEILKEADVRPALDAPRGVEVAVRKNGHEKFLFLLNHTDQVQFVDAGGTYPELIYGRTEAETVRLSPRDVKILQVIEK</sequence>